<feature type="chain" id="PRO_0000396627" description="DNA replication factor Cdt1">
    <location>
        <begin position="1"/>
        <end position="617"/>
    </location>
</feature>
<feature type="region of interest" description="Disordered" evidence="1">
    <location>
        <begin position="1"/>
        <end position="27"/>
    </location>
</feature>
<feature type="region of interest" description="Disordered" evidence="1">
    <location>
        <begin position="51"/>
        <end position="111"/>
    </location>
</feature>
<feature type="region of interest" description="Disordered" evidence="1">
    <location>
        <begin position="462"/>
        <end position="483"/>
    </location>
</feature>
<feature type="short sequence motif" description="PIP-box K+4 motif">
    <location>
        <begin position="1"/>
        <end position="25"/>
    </location>
</feature>
<feature type="compositionally biased region" description="Polar residues" evidence="1">
    <location>
        <begin position="1"/>
        <end position="22"/>
    </location>
</feature>
<feature type="mutagenesis site" description="Abolishes degradation by the proteasome due to the disrupted interaction with pcna." evidence="3">
    <original>T</original>
    <variation>A</variation>
    <location>
        <position position="7"/>
    </location>
</feature>
<feature type="mutagenesis site" description="Abolishes degradation by the proteasome due to the disrupted interaction with pcna." evidence="3">
    <original>D</original>
    <variation>A</variation>
    <location>
        <position position="8"/>
    </location>
</feature>
<feature type="mutagenesis site" description="Abolishes degradation by the proteasome without affecting the interaction with pcna." evidence="3">
    <original>K</original>
    <variation>A</variation>
    <location>
        <position position="14"/>
    </location>
</feature>
<feature type="sequence conflict" description="In Ref. 2; AAH72771." evidence="4" ref="2">
    <original>S</original>
    <variation>A</variation>
    <location>
        <position position="11"/>
    </location>
</feature>
<feature type="sequence conflict" description="In Ref. 2; AAH72771." evidence="4" ref="2">
    <original>R</original>
    <variation>H</variation>
    <location>
        <position position="206"/>
    </location>
</feature>
<feature type="sequence conflict" description="In Ref. 2; AAH72771." evidence="4" ref="2">
    <original>T</original>
    <variation>N</variation>
    <location>
        <position position="471"/>
    </location>
</feature>
<feature type="sequence conflict" description="In Ref. 2; AAH72771." evidence="4" ref="2">
    <original>P</original>
    <variation>L</variation>
    <location>
        <position position="585"/>
    </location>
</feature>
<feature type="sequence conflict" description="In Ref. 2; AAH72771." evidence="4" ref="2">
    <original>Q</original>
    <variation>K</variation>
    <location>
        <position position="596"/>
    </location>
</feature>
<proteinExistence type="evidence at protein level"/>
<gene>
    <name type="primary">cdt1</name>
</gene>
<reference key="1">
    <citation type="journal article" date="2000" name="Nature">
        <title>XCDT1 is required for the assembly of pre-replicative complexes in Xenopus laevis.</title>
        <authorList>
            <person name="Maiorano D."/>
            <person name="Moreau J."/>
            <person name="Mechali M."/>
        </authorList>
    </citation>
    <scope>NUCLEOTIDE SEQUENCE [MRNA]</scope>
    <scope>FUNCTION</scope>
    <scope>SUBCELLULAR LOCATION</scope>
</reference>
<reference key="2">
    <citation type="submission" date="2004-06" db="EMBL/GenBank/DDBJ databases">
        <authorList>
            <consortium name="NIH - Xenopus Gene Collection (XGC) project"/>
        </authorList>
    </citation>
    <scope>NUCLEOTIDE SEQUENCE [LARGE SCALE MRNA]</scope>
    <source>
        <tissue>Ovary</tissue>
    </source>
</reference>
<reference key="3">
    <citation type="journal article" date="2009" name="Mol. Cell">
        <title>Docking of a specialized PIP Box onto chromatin-bound PCNA creates a degron for the ubiquitin ligase CRL4Cdt2.</title>
        <authorList>
            <person name="Havens C.G."/>
            <person name="Walter J.C."/>
        </authorList>
    </citation>
    <scope>UBIQUITINATION</scope>
    <scope>DOMAIN PIP-BOX K+4 MOTIF</scope>
    <scope>MUTAGENESIS OF THR-7; ASP-8 AND LYS-14</scope>
    <scope>INTERACTION WITH PCNA</scope>
</reference>
<evidence type="ECO:0000256" key="1">
    <source>
        <dbReference type="SAM" id="MobiDB-lite"/>
    </source>
</evidence>
<evidence type="ECO:0000269" key="2">
    <source>
    </source>
</evidence>
<evidence type="ECO:0000269" key="3">
    <source>
    </source>
</evidence>
<evidence type="ECO:0000305" key="4"/>
<sequence length="617" mass="69536">MSQMRVTDFFSQSKRGTAAQNSKGRKVEAVLETRRAVTRSRAASVKAEEFLKAPCTPERASPTVSQCIGPSSKKRTRQDSDSEPLRTQQRQGKSARKKLKLPEGEHGGSVQQQLFSPCNKVALEHVTPSSLGKKIKDMVNVSLSPKFNELARNPTTPETKSPAKENLLELKSRLQRIQELAQKVNLPAASSEGKVTITDLKARLKRAQELDTKIRAKAEKTETQAIDLTEQPAQESEKAPAYQRFHNLAQDAAPGLTLPYKYKVLAEMFRSMDTIVGMLFNRSETITFSKVKQGVQDMMRKQFEQRNVGQIKTVYPNAYKYRQEKNIPTFKDGVKKTDYQLTIEPLVAEGDMLSGRPHLSASRLLERKQLFHRSLTSIVKQHHRVFLTSLNPPMLVPDDKLTRWHPRFNVDEVLDVTPAELPLPPQVERLTTAQEVLSKARGLITPKMEKALANLALKTAENAGETKNVSTEETKSTATTSTSTALKGVSQSLLERIRAKEAQKLQAIMTRRPQQEERLLMMSRLPELARILRNVFVAEKKPALTLEVTCSRVIASCRSSMSPGEMEKHLALLSEILPDWLSIHPVRKDTYYKLNQSMDLNLILERLAKKTKEEESL</sequence>
<comment type="function">
    <text evidence="2">DNA replication licensing factor, required for pre-replication complex assembly. Cooperates with cdc6 to promote the loading of the mini-chromosome maintenance complex onto chromatin to form the pre-replication complex necessary to initiate DNA replication.</text>
</comment>
<comment type="subunit">
    <text evidence="3">Interacts with pcna.</text>
</comment>
<comment type="interaction">
    <interactant intactId="EBI-3511006">
        <id>Q9I9A7</id>
    </interactant>
    <interactant intactId="EBI-7120476">
        <id>O93352</id>
        <label>gmnn.S</label>
    </interactant>
    <organismsDiffer>false</organismsDiffer>
    <experiments>4</experiments>
</comment>
<comment type="subcellular location">
    <subcellularLocation>
        <location evidence="2">Nucleus</location>
    </subcellularLocation>
</comment>
<comment type="domain">
    <text evidence="3">The PIP-box K+4 motif mediates both the interaction with pcna and the recruitment of the DCX(DTL) complex: while the PIP-box interacts with pcna, the presence of the K+4 submotif, recruits the DCX(DTL) complex, leading to its ubiquitination (PubMed:19595719).</text>
</comment>
<comment type="PTM">
    <text evidence="3">Ubiquitinated by the DCX(DTL) complex, also named CRL4(CDT2) complex, in response to DNA damage, leading to its degradation. Ubiquitination by the DCX(DTL) complex is necessary to ensure proper cell cycle regulation and is pcna-dependent: interacts with pcna via its PIP-box, while the presence of the containing the 'K+4' motif in the PIP box, recruit the DCX(DTL) complex, leading to its degradation. The interaction with GMNN protects it against ubiquitination.</text>
</comment>
<comment type="similarity">
    <text evidence="4">Belongs to the Cdt1 family.</text>
</comment>
<comment type="sequence caution" evidence="4">
    <conflict type="erroneous initiation">
        <sequence resource="EMBL-CDS" id="CAB87836"/>
    </conflict>
    <text>Extended N-terminus.</text>
</comment>
<dbReference type="EMBL" id="AJ250122">
    <property type="protein sequence ID" value="CAB87836.1"/>
    <property type="status" value="ALT_INIT"/>
    <property type="molecule type" value="mRNA"/>
</dbReference>
<dbReference type="EMBL" id="BC072771">
    <property type="protein sequence ID" value="AAH72771.1"/>
    <property type="molecule type" value="mRNA"/>
</dbReference>
<dbReference type="RefSeq" id="NP_001081738.1">
    <property type="nucleotide sequence ID" value="NM_001088269.1"/>
</dbReference>
<dbReference type="SMR" id="Q9I9A7"/>
<dbReference type="BioGRID" id="99359">
    <property type="interactions" value="6"/>
</dbReference>
<dbReference type="DIP" id="DIP-43926N"/>
<dbReference type="IntAct" id="Q9I9A7">
    <property type="interactions" value="3"/>
</dbReference>
<dbReference type="MINT" id="Q9I9A7"/>
<dbReference type="DNASU" id="398024"/>
<dbReference type="GeneID" id="398024"/>
<dbReference type="KEGG" id="xla:398024"/>
<dbReference type="AGR" id="Xenbase:XB-GENE-1014892"/>
<dbReference type="CTD" id="398024"/>
<dbReference type="Xenbase" id="XB-GENE-1014892">
    <property type="gene designation" value="cdt1.L"/>
</dbReference>
<dbReference type="OrthoDB" id="341730at2759"/>
<dbReference type="Proteomes" id="UP000186698">
    <property type="component" value="Chromosome 4L"/>
</dbReference>
<dbReference type="Bgee" id="398024">
    <property type="expression patterns" value="Expressed in blastula and 19 other cell types or tissues"/>
</dbReference>
<dbReference type="GO" id="GO:0005634">
    <property type="term" value="C:nucleus"/>
    <property type="evidence" value="ECO:0000318"/>
    <property type="project" value="GO_Central"/>
</dbReference>
<dbReference type="GO" id="GO:0031490">
    <property type="term" value="F:chromatin DNA binding"/>
    <property type="evidence" value="ECO:0000315"/>
    <property type="project" value="UniProtKB"/>
</dbReference>
<dbReference type="GO" id="GO:0003677">
    <property type="term" value="F:DNA binding"/>
    <property type="evidence" value="ECO:0000318"/>
    <property type="project" value="GO_Central"/>
</dbReference>
<dbReference type="GO" id="GO:0070182">
    <property type="term" value="F:DNA polymerase binding"/>
    <property type="evidence" value="ECO:0000318"/>
    <property type="project" value="GO_Central"/>
</dbReference>
<dbReference type="GO" id="GO:0000076">
    <property type="term" value="P:DNA replication checkpoint signaling"/>
    <property type="evidence" value="ECO:0000318"/>
    <property type="project" value="GO_Central"/>
</dbReference>
<dbReference type="GO" id="GO:0071163">
    <property type="term" value="P:DNA replication preinitiation complex assembly"/>
    <property type="evidence" value="ECO:0000318"/>
    <property type="project" value="GO_Central"/>
</dbReference>
<dbReference type="GO" id="GO:0000278">
    <property type="term" value="P:mitotic cell cycle"/>
    <property type="evidence" value="ECO:0000318"/>
    <property type="project" value="GO_Central"/>
</dbReference>
<dbReference type="GO" id="GO:0030174">
    <property type="term" value="P:regulation of DNA-templated DNA replication initiation"/>
    <property type="evidence" value="ECO:0000318"/>
    <property type="project" value="GO_Central"/>
</dbReference>
<dbReference type="CDD" id="cd08767">
    <property type="entry name" value="Cdt1_c"/>
    <property type="match status" value="1"/>
</dbReference>
<dbReference type="CDD" id="cd08674">
    <property type="entry name" value="Cdt1_m"/>
    <property type="match status" value="1"/>
</dbReference>
<dbReference type="FunFam" id="1.10.10.1420:FF:000001">
    <property type="entry name" value="Chromatin licensing and DNA replication factor 1"/>
    <property type="match status" value="1"/>
</dbReference>
<dbReference type="Gene3D" id="1.10.10.1420">
    <property type="entry name" value="DNA replication factor Cdt1, C-terminal WH domain"/>
    <property type="match status" value="1"/>
</dbReference>
<dbReference type="InterPro" id="IPR045173">
    <property type="entry name" value="Cdt1"/>
</dbReference>
<dbReference type="InterPro" id="IPR032054">
    <property type="entry name" value="Cdt1_C"/>
</dbReference>
<dbReference type="InterPro" id="IPR038090">
    <property type="entry name" value="Cdt1_C_WH_dom_sf"/>
</dbReference>
<dbReference type="InterPro" id="IPR014939">
    <property type="entry name" value="CDT1_Gemini-bd-like"/>
</dbReference>
<dbReference type="InterPro" id="IPR036390">
    <property type="entry name" value="WH_DNA-bd_sf"/>
</dbReference>
<dbReference type="PANTHER" id="PTHR28637">
    <property type="entry name" value="DNA REPLICATION FACTOR CDT1"/>
    <property type="match status" value="1"/>
</dbReference>
<dbReference type="PANTHER" id="PTHR28637:SF1">
    <property type="entry name" value="DNA REPLICATION FACTOR CDT1"/>
    <property type="match status" value="1"/>
</dbReference>
<dbReference type="Pfam" id="PF08839">
    <property type="entry name" value="CDT1"/>
    <property type="match status" value="1"/>
</dbReference>
<dbReference type="Pfam" id="PF16679">
    <property type="entry name" value="CDT1_C"/>
    <property type="match status" value="1"/>
</dbReference>
<dbReference type="SMART" id="SM01075">
    <property type="entry name" value="CDT1"/>
    <property type="match status" value="1"/>
</dbReference>
<dbReference type="SUPFAM" id="SSF46785">
    <property type="entry name" value="Winged helix' DNA-binding domain"/>
    <property type="match status" value="1"/>
</dbReference>
<name>CDT1_XENLA</name>
<accession>Q9I9A7</accession>
<accession>Q6GQH3</accession>
<protein>
    <recommendedName>
        <fullName>DNA replication factor Cdt1</fullName>
        <shortName>XCDT1</shortName>
    </recommendedName>
</protein>
<organism>
    <name type="scientific">Xenopus laevis</name>
    <name type="common">African clawed frog</name>
    <dbReference type="NCBI Taxonomy" id="8355"/>
    <lineage>
        <taxon>Eukaryota</taxon>
        <taxon>Metazoa</taxon>
        <taxon>Chordata</taxon>
        <taxon>Craniata</taxon>
        <taxon>Vertebrata</taxon>
        <taxon>Euteleostomi</taxon>
        <taxon>Amphibia</taxon>
        <taxon>Batrachia</taxon>
        <taxon>Anura</taxon>
        <taxon>Pipoidea</taxon>
        <taxon>Pipidae</taxon>
        <taxon>Xenopodinae</taxon>
        <taxon>Xenopus</taxon>
        <taxon>Xenopus</taxon>
    </lineage>
</organism>
<keyword id="KW-0131">Cell cycle</keyword>
<keyword id="KW-0235">DNA replication</keyword>
<keyword id="KW-0539">Nucleus</keyword>
<keyword id="KW-0656">Proto-oncogene</keyword>
<keyword id="KW-1185">Reference proteome</keyword>
<keyword id="KW-0832">Ubl conjugation</keyword>